<name>PEAM1_ARATH</name>
<gene>
    <name evidence="14" type="primary">NMT1</name>
    <name evidence="16" type="synonym">DPR2</name>
    <name evidence="15" type="synonym">PEAMT</name>
    <name evidence="15" type="synonym">XPL1</name>
    <name evidence="18" type="ordered locus">At3g18000</name>
    <name evidence="19" type="ORF">MEB5.22</name>
</gene>
<protein>
    <recommendedName>
        <fullName evidence="14">Phosphoethanolamine N-methyltransferase 1</fullName>
        <shortName evidence="14">AtNMT1</shortName>
        <shortName evidence="17">PEAMT1</shortName>
        <ecNumber evidence="3">2.1.1.103</ecNumber>
    </recommendedName>
    <alternativeName>
        <fullName evidence="16">Protein DEFECTIVE PRIMARY ROOT 2</fullName>
    </alternativeName>
    <alternativeName>
        <fullName evidence="15">Protein XIPOTL 1</fullName>
    </alternativeName>
</protein>
<sequence>MAASYEEERDIQKNYWIEHSADLTVEAMMLDSRASDLDKEERPEVLSLLPPYEGKSVLELGAGIGRFTGELAQKAGELIALDFIDNVIKKNESINGHYKNVKFMCADVTSPDLKITDGSLDLIFSNWLLMYLSDKEVELLAERMVGWIKVGGYIFFRESCFHQSGDSKRKSNPTHYREPRFYSKVFQECQTRDAAGNSFELSMIGCKCIGAYVKNKKNQNQICWIWQKVSSENDRGFQRFLDNVQYKSSGILRYERVFGQGFVSTGGLETTKEFVEKMNLKPGQKVLDVGCGIGGGDFYMAEKFDVHVVGIDLSVNMISFALERAIGLSCSVEFEVADCTTKHYPDNSFDVIYSRDTILHIQDKPALFRTFFKWLKPGGKVLISDYCRSPKTPSAEFSEYIKQRGYDLHDVQAYGQMLKDAGFTDVIAEDRTDQFMQVLKRELDRVEKEKEKFISDFSKEDYDDIVGGWKSKLERCASDEQKWGLFIANKN</sequence>
<dbReference type="EC" id="2.1.1.103" evidence="3"/>
<dbReference type="EMBL" id="AF197940">
    <property type="protein sequence ID" value="AAG41121.1"/>
    <property type="molecule type" value="mRNA"/>
</dbReference>
<dbReference type="EMBL" id="AB019230">
    <property type="protein sequence ID" value="BAB02720.1"/>
    <property type="status" value="ALT_SEQ"/>
    <property type="molecule type" value="Genomic_DNA"/>
</dbReference>
<dbReference type="EMBL" id="CP002686">
    <property type="protein sequence ID" value="AEE76033.1"/>
    <property type="molecule type" value="Genomic_DNA"/>
</dbReference>
<dbReference type="EMBL" id="AF367299">
    <property type="protein sequence ID" value="AAK32886.1"/>
    <property type="molecule type" value="mRNA"/>
</dbReference>
<dbReference type="EMBL" id="AY058175">
    <property type="protein sequence ID" value="AAL25589.1"/>
    <property type="molecule type" value="mRNA"/>
</dbReference>
<dbReference type="EMBL" id="AY091683">
    <property type="protein sequence ID" value="AAM10282.1"/>
    <property type="molecule type" value="mRNA"/>
</dbReference>
<dbReference type="EMBL" id="AY093093">
    <property type="protein sequence ID" value="AAM13092.1"/>
    <property type="molecule type" value="mRNA"/>
</dbReference>
<dbReference type="RefSeq" id="NP_188427.2">
    <property type="nucleotide sequence ID" value="NM_112681.3"/>
</dbReference>
<dbReference type="PDB" id="5WP4">
    <property type="method" value="X-ray"/>
    <property type="resolution" value="1.34 A"/>
    <property type="chains" value="A=1-491"/>
</dbReference>
<dbReference type="PDBsum" id="5WP4"/>
<dbReference type="SMR" id="Q9FR44"/>
<dbReference type="BioGRID" id="6657">
    <property type="interactions" value="4"/>
</dbReference>
<dbReference type="FunCoup" id="Q9FR44">
    <property type="interactions" value="34"/>
</dbReference>
<dbReference type="STRING" id="3702.Q9FR44"/>
<dbReference type="iPTMnet" id="Q9FR44"/>
<dbReference type="PaxDb" id="3702-AT3G18000.1"/>
<dbReference type="ProteomicsDB" id="236339"/>
<dbReference type="EnsemblPlants" id="AT3G18000.1">
    <property type="protein sequence ID" value="AT3G18000.1"/>
    <property type="gene ID" value="AT3G18000"/>
</dbReference>
<dbReference type="GeneID" id="821324"/>
<dbReference type="Gramene" id="AT3G18000.1">
    <property type="protein sequence ID" value="AT3G18000.1"/>
    <property type="gene ID" value="AT3G18000"/>
</dbReference>
<dbReference type="KEGG" id="ath:AT3G18000"/>
<dbReference type="Araport" id="AT3G18000"/>
<dbReference type="TAIR" id="AT3G18000">
    <property type="gene designation" value="XPL1"/>
</dbReference>
<dbReference type="eggNOG" id="KOG1269">
    <property type="taxonomic scope" value="Eukaryota"/>
</dbReference>
<dbReference type="HOGENOM" id="CLU_029163_0_0_1"/>
<dbReference type="InParanoid" id="Q9FR44"/>
<dbReference type="OMA" id="KSYWTEH"/>
<dbReference type="OrthoDB" id="8300214at2759"/>
<dbReference type="PhylomeDB" id="Q9FR44"/>
<dbReference type="BioCyc" id="ARA:AT3G18000-MONOMER"/>
<dbReference type="BRENDA" id="2.1.1.103">
    <property type="organism ID" value="399"/>
</dbReference>
<dbReference type="UniPathway" id="UPA00753">
    <property type="reaction ID" value="UER00738"/>
</dbReference>
<dbReference type="CD-CODE" id="4299E36E">
    <property type="entry name" value="Nucleolus"/>
</dbReference>
<dbReference type="PRO" id="PR:Q9FR44"/>
<dbReference type="Proteomes" id="UP000006548">
    <property type="component" value="Chromosome 3"/>
</dbReference>
<dbReference type="ExpressionAtlas" id="Q9FR44">
    <property type="expression patterns" value="baseline and differential"/>
</dbReference>
<dbReference type="GO" id="GO:0005737">
    <property type="term" value="C:cytoplasm"/>
    <property type="evidence" value="ECO:0000250"/>
    <property type="project" value="TAIR"/>
</dbReference>
<dbReference type="GO" id="GO:0008168">
    <property type="term" value="F:methyltransferase activity"/>
    <property type="evidence" value="ECO:0000250"/>
    <property type="project" value="TAIR"/>
</dbReference>
<dbReference type="GO" id="GO:0000234">
    <property type="term" value="F:phosphoethanolamine N-methyltransferase activity"/>
    <property type="evidence" value="ECO:0007669"/>
    <property type="project" value="UniProtKB-EC"/>
</dbReference>
<dbReference type="GO" id="GO:0042425">
    <property type="term" value="P:choline biosynthetic process"/>
    <property type="evidence" value="ECO:0000315"/>
    <property type="project" value="TAIR"/>
</dbReference>
<dbReference type="GO" id="GO:0032259">
    <property type="term" value="P:methylation"/>
    <property type="evidence" value="ECO:0007669"/>
    <property type="project" value="UniProtKB-KW"/>
</dbReference>
<dbReference type="GO" id="GO:0006656">
    <property type="term" value="P:phosphatidylcholine biosynthetic process"/>
    <property type="evidence" value="ECO:0007669"/>
    <property type="project" value="UniProtKB-UniPathway"/>
</dbReference>
<dbReference type="GO" id="GO:0009555">
    <property type="term" value="P:pollen development"/>
    <property type="evidence" value="ECO:0000315"/>
    <property type="project" value="TAIR"/>
</dbReference>
<dbReference type="GO" id="GO:0009860">
    <property type="term" value="P:pollen tube growth"/>
    <property type="evidence" value="ECO:0000315"/>
    <property type="project" value="TAIR"/>
</dbReference>
<dbReference type="GO" id="GO:0010183">
    <property type="term" value="P:pollen tube guidance"/>
    <property type="evidence" value="ECO:0000315"/>
    <property type="project" value="TAIR"/>
</dbReference>
<dbReference type="GO" id="GO:0048528">
    <property type="term" value="P:post-embryonic root development"/>
    <property type="evidence" value="ECO:0000315"/>
    <property type="project" value="TAIR"/>
</dbReference>
<dbReference type="GO" id="GO:0009826">
    <property type="term" value="P:unidimensional cell growth"/>
    <property type="evidence" value="ECO:0000315"/>
    <property type="project" value="TAIR"/>
</dbReference>
<dbReference type="CDD" id="cd02440">
    <property type="entry name" value="AdoMet_MTases"/>
    <property type="match status" value="2"/>
</dbReference>
<dbReference type="FunFam" id="3.40.50.150:FF:000237">
    <property type="entry name" value="N-methyltransferase 1"/>
    <property type="match status" value="1"/>
</dbReference>
<dbReference type="FunFam" id="3.40.50.150:FF:000293">
    <property type="entry name" value="N-methyltransferase 1"/>
    <property type="match status" value="1"/>
</dbReference>
<dbReference type="Gene3D" id="3.40.50.150">
    <property type="entry name" value="Vaccinia Virus protein VP39"/>
    <property type="match status" value="2"/>
</dbReference>
<dbReference type="InterPro" id="IPR025714">
    <property type="entry name" value="Methyltranfer_dom"/>
</dbReference>
<dbReference type="InterPro" id="IPR041698">
    <property type="entry name" value="Methyltransf_25"/>
</dbReference>
<dbReference type="InterPro" id="IPR025771">
    <property type="entry name" value="Phosphoethanolamine_N-MeTrfase"/>
</dbReference>
<dbReference type="InterPro" id="IPR029063">
    <property type="entry name" value="SAM-dependent_MTases_sf"/>
</dbReference>
<dbReference type="PANTHER" id="PTHR44307">
    <property type="entry name" value="PHOSPHOETHANOLAMINE METHYLTRANSFERASE"/>
    <property type="match status" value="1"/>
</dbReference>
<dbReference type="PANTHER" id="PTHR44307:SF2">
    <property type="entry name" value="PHOSPHOETHANOLAMINE METHYLTRANSFERASE ISOFORM X1"/>
    <property type="match status" value="1"/>
</dbReference>
<dbReference type="Pfam" id="PF13649">
    <property type="entry name" value="Methyltransf_25"/>
    <property type="match status" value="1"/>
</dbReference>
<dbReference type="Pfam" id="PF13847">
    <property type="entry name" value="Methyltransf_31"/>
    <property type="match status" value="1"/>
</dbReference>
<dbReference type="SUPFAM" id="SSF53335">
    <property type="entry name" value="S-adenosyl-L-methionine-dependent methyltransferases"/>
    <property type="match status" value="2"/>
</dbReference>
<dbReference type="PROSITE" id="PS51582">
    <property type="entry name" value="SAM_PEAMT"/>
    <property type="match status" value="1"/>
</dbReference>
<comment type="function">
    <text evidence="3 5 7 8 10 11 12 13">Involved in phosphocholine biosynthesis (PubMed:11115895, PubMed:15295103, PubMed:30218542). Catalyzes the N-methylation of phosphoethanolamine, phosphomonomethylethanolamine and phosphodimethylethanolamine, the three methylation steps required to convert phosphoethanolamine to phosphocholine (PC) (PubMed:11115895). Required for root system development and epidermal cell integrity through its role in choline and phospholipid metabolism (PubMed:15295103). In association with NMT3, regulates PC homeostasis, phase transition at the shoot apex, coordinated organ development, and fertility (PubMed:29777000). In association with NMT3, involved in phosphatidylcholine biosynthesis and vascular development (PubMed:30218542). In association with NMT2, involved in the production of phosphatidylcholine in roots, essential for root development (PubMed:30518673). In association with NMT2 produce phosphocholine mainly for leaf growth maintenance (PubMed:35560207). Contributes to the regulation of overall root zonation dynamics through reactive oxygen species (ROS) and auxin-regulated cell differentiation (PubMed:31246280). Participates in root development of primary root elongation under salt stress conditions by balancing reactive oxygen species (ROS) production and distribution through abscisic acid (ABA) signaling (PubMed:35789105).</text>
</comment>
<comment type="catalytic activity">
    <reaction evidence="3">
        <text>phosphoethanolamine + S-adenosyl-L-methionine = N-methylethanolamine phosphate + S-adenosyl-L-homocysteine + H(+)</text>
        <dbReference type="Rhea" id="RHEA:20365"/>
        <dbReference type="ChEBI" id="CHEBI:15378"/>
        <dbReference type="ChEBI" id="CHEBI:57781"/>
        <dbReference type="ChEBI" id="CHEBI:57856"/>
        <dbReference type="ChEBI" id="CHEBI:58190"/>
        <dbReference type="ChEBI" id="CHEBI:59789"/>
        <dbReference type="EC" id="2.1.1.103"/>
    </reaction>
    <physiologicalReaction direction="left-to-right" evidence="3">
        <dbReference type="Rhea" id="RHEA:20366"/>
    </physiologicalReaction>
</comment>
<comment type="catalytic activity">
    <reaction evidence="3">
        <text>N-methylethanolamine phosphate + S-adenosyl-L-methionine = N,N-dimethylethanolamine phosphate + S-adenosyl-L-homocysteine + H(+)</text>
        <dbReference type="Rhea" id="RHEA:25321"/>
        <dbReference type="ChEBI" id="CHEBI:15378"/>
        <dbReference type="ChEBI" id="CHEBI:57781"/>
        <dbReference type="ChEBI" id="CHEBI:57856"/>
        <dbReference type="ChEBI" id="CHEBI:58641"/>
        <dbReference type="ChEBI" id="CHEBI:59789"/>
        <dbReference type="EC" id="2.1.1.103"/>
    </reaction>
    <physiologicalReaction direction="left-to-right" evidence="3">
        <dbReference type="Rhea" id="RHEA:25322"/>
    </physiologicalReaction>
</comment>
<comment type="catalytic activity">
    <reaction evidence="3">
        <text>N,N-dimethylethanolamine phosphate + S-adenosyl-L-methionine = phosphocholine + S-adenosyl-L-homocysteine + H(+)</text>
        <dbReference type="Rhea" id="RHEA:25325"/>
        <dbReference type="ChEBI" id="CHEBI:15378"/>
        <dbReference type="ChEBI" id="CHEBI:57856"/>
        <dbReference type="ChEBI" id="CHEBI:58641"/>
        <dbReference type="ChEBI" id="CHEBI:59789"/>
        <dbReference type="ChEBI" id="CHEBI:295975"/>
        <dbReference type="EC" id="2.1.1.103"/>
    </reaction>
    <physiologicalReaction direction="left-to-right" evidence="3">
        <dbReference type="Rhea" id="RHEA:25326"/>
    </physiologicalReaction>
</comment>
<comment type="pathway">
    <text evidence="17">Phospholipid metabolism; phosphatidylcholine biosynthesis; phosphocholine from phosphoethanolamine: step 1/1.</text>
</comment>
<comment type="subcellular location">
    <subcellularLocation>
        <location evidence="17">Cytoplasm</location>
    </subcellularLocation>
</comment>
<comment type="tissue specificity">
    <text evidence="5 8">Highly expressed in the meristem and elongation zones of the root (PubMed:15295103). Expressed in differentiated root epidermal cells (PubMed:15295103). Highly expressed in leaf vasculature (PubMed:30218542).</text>
</comment>
<comment type="induction">
    <text evidence="12 13">Induced by salt stress (PubMed:35789105). Induced by phosphate starvation (PubMed:35560207).</text>
</comment>
<comment type="disruption phenotype">
    <text evidence="4 5 7 8 9 10 11">Altered root development due to defect in primary root elongation and root epidermal cell development (PubMed:15295103, PubMed:31246280). Temperature-sensitive male sterility and salt hypersensitivity phenotypes (PubMed:12215503). The double mutant nmt1 and nmt3 exhibit severe compromised aerial growth and reproduction, extensive sterility, drastically reduced phosphocholine concentrations, and altered lipid profiles (PubMed:29777000, PubMed:30218542, PubMed:30381317). The triple mutant nmt1, nmt2 and nmt3 is seedling lethal (PubMed:30518673).</text>
</comment>
<comment type="similarity">
    <text evidence="2">Belongs to the class I-like SAM-binding methyltransferase superfamily. PEAMT family.</text>
</comment>
<comment type="sequence caution" evidence="17">
    <conflict type="erroneous gene model prediction">
        <sequence resource="EMBL-CDS" id="BAB02720"/>
    </conflict>
</comment>
<evidence type="ECO:0000250" key="1">
    <source>
        <dbReference type="UniProtKB" id="Q22993"/>
    </source>
</evidence>
<evidence type="ECO:0000255" key="2">
    <source>
        <dbReference type="PROSITE-ProRule" id="PRU00915"/>
    </source>
</evidence>
<evidence type="ECO:0000269" key="3">
    <source>
    </source>
</evidence>
<evidence type="ECO:0000269" key="4">
    <source>
    </source>
</evidence>
<evidence type="ECO:0000269" key="5">
    <source>
    </source>
</evidence>
<evidence type="ECO:0000269" key="6">
    <source>
    </source>
</evidence>
<evidence type="ECO:0000269" key="7">
    <source>
    </source>
</evidence>
<evidence type="ECO:0000269" key="8">
    <source>
    </source>
</evidence>
<evidence type="ECO:0000269" key="9">
    <source>
    </source>
</evidence>
<evidence type="ECO:0000269" key="10">
    <source>
    </source>
</evidence>
<evidence type="ECO:0000269" key="11">
    <source>
    </source>
</evidence>
<evidence type="ECO:0000269" key="12">
    <source>
    </source>
</evidence>
<evidence type="ECO:0000269" key="13">
    <source>
    </source>
</evidence>
<evidence type="ECO:0000303" key="14">
    <source>
    </source>
</evidence>
<evidence type="ECO:0000303" key="15">
    <source>
    </source>
</evidence>
<evidence type="ECO:0000303" key="16">
    <source>
    </source>
</evidence>
<evidence type="ECO:0000305" key="17"/>
<evidence type="ECO:0000312" key="18">
    <source>
        <dbReference type="Araport" id="AT3G18000"/>
    </source>
</evidence>
<evidence type="ECO:0000312" key="19">
    <source>
        <dbReference type="EMBL" id="BAB02720.1"/>
    </source>
</evidence>
<evidence type="ECO:0007744" key="20">
    <source>
        <dbReference type="PDB" id="5WP4"/>
    </source>
</evidence>
<evidence type="ECO:0007744" key="21">
    <source>
    </source>
</evidence>
<evidence type="ECO:0007829" key="22">
    <source>
        <dbReference type="PDB" id="5WP4"/>
    </source>
</evidence>
<reference key="1">
    <citation type="journal article" date="2000" name="Plant Physiol.">
        <title>The isolation and characterization in yeast of a gene for Arabidopsis S-adenosylmethionine:phospho-ethanolamine N-methyltransferase.</title>
        <authorList>
            <person name="Bolognese C.P."/>
            <person name="McGraw P."/>
        </authorList>
    </citation>
    <scope>NUCLEOTIDE SEQUENCE [MRNA]</scope>
    <scope>FUNCTION</scope>
    <scope>CATALYTIC ACTIVITY</scope>
    <source>
        <strain>cv. Landsberg erecta</strain>
        <tissue>Seedling</tissue>
    </source>
</reference>
<reference key="2">
    <citation type="journal article" date="2002" name="Plant Cell">
        <title>Silencing of phosphoethanolamine N-methyltransferase results in temperature-sensitive male sterility and salt hypersensitivity in Arabidopsis.</title>
        <authorList>
            <person name="Mou Z."/>
            <person name="Wang X."/>
            <person name="Fu Z."/>
            <person name="Dai Y."/>
            <person name="Han C."/>
            <person name="Ouyang J."/>
            <person name="Bao F."/>
            <person name="Hu Y."/>
            <person name="Li J."/>
        </authorList>
    </citation>
    <scope>DISRUPTION PHENOTYPE</scope>
</reference>
<reference key="3">
    <citation type="journal article" date="2000" name="DNA Res.">
        <title>Structural analysis of Arabidopsis thaliana chromosome 3. I. Sequence features of the regions of 4,504,864 bp covered by sixty P1 and TAC clones.</title>
        <authorList>
            <person name="Sato S."/>
            <person name="Nakamura Y."/>
            <person name="Kaneko T."/>
            <person name="Katoh T."/>
            <person name="Asamizu E."/>
            <person name="Tabata S."/>
        </authorList>
    </citation>
    <scope>NUCLEOTIDE SEQUENCE [LARGE SCALE GENOMIC DNA]</scope>
    <source>
        <strain>cv. Columbia</strain>
    </source>
</reference>
<reference key="4">
    <citation type="journal article" date="2017" name="Plant J.">
        <title>Araport11: a complete reannotation of the Arabidopsis thaliana reference genome.</title>
        <authorList>
            <person name="Cheng C.Y."/>
            <person name="Krishnakumar V."/>
            <person name="Chan A.P."/>
            <person name="Thibaud-Nissen F."/>
            <person name="Schobel S."/>
            <person name="Town C.D."/>
        </authorList>
    </citation>
    <scope>GENOME REANNOTATION</scope>
    <source>
        <strain>cv. Columbia</strain>
    </source>
</reference>
<reference key="5">
    <citation type="journal article" date="2003" name="Science">
        <title>Empirical analysis of transcriptional activity in the Arabidopsis genome.</title>
        <authorList>
            <person name="Yamada K."/>
            <person name="Lim J."/>
            <person name="Dale J.M."/>
            <person name="Chen H."/>
            <person name="Shinn P."/>
            <person name="Palm C.J."/>
            <person name="Southwick A.M."/>
            <person name="Wu H.C."/>
            <person name="Kim C.J."/>
            <person name="Nguyen M."/>
            <person name="Pham P.K."/>
            <person name="Cheuk R.F."/>
            <person name="Karlin-Newmann G."/>
            <person name="Liu S.X."/>
            <person name="Lam B."/>
            <person name="Sakano H."/>
            <person name="Wu T."/>
            <person name="Yu G."/>
            <person name="Miranda M."/>
            <person name="Quach H.L."/>
            <person name="Tripp M."/>
            <person name="Chang C.H."/>
            <person name="Lee J.M."/>
            <person name="Toriumi M.J."/>
            <person name="Chan M.M."/>
            <person name="Tang C.C."/>
            <person name="Onodera C.S."/>
            <person name="Deng J.M."/>
            <person name="Akiyama K."/>
            <person name="Ansari Y."/>
            <person name="Arakawa T."/>
            <person name="Banh J."/>
            <person name="Banno F."/>
            <person name="Bowser L."/>
            <person name="Brooks S.Y."/>
            <person name="Carninci P."/>
            <person name="Chao Q."/>
            <person name="Choy N."/>
            <person name="Enju A."/>
            <person name="Goldsmith A.D."/>
            <person name="Gurjal M."/>
            <person name="Hansen N.F."/>
            <person name="Hayashizaki Y."/>
            <person name="Johnson-Hopson C."/>
            <person name="Hsuan V.W."/>
            <person name="Iida K."/>
            <person name="Karnes M."/>
            <person name="Khan S."/>
            <person name="Koesema E."/>
            <person name="Ishida J."/>
            <person name="Jiang P.X."/>
            <person name="Jones T."/>
            <person name="Kawai J."/>
            <person name="Kamiya A."/>
            <person name="Meyers C."/>
            <person name="Nakajima M."/>
            <person name="Narusaka M."/>
            <person name="Seki M."/>
            <person name="Sakurai T."/>
            <person name="Satou M."/>
            <person name="Tamse R."/>
            <person name="Vaysberg M."/>
            <person name="Wallender E.K."/>
            <person name="Wong C."/>
            <person name="Yamamura Y."/>
            <person name="Yuan S."/>
            <person name="Shinozaki K."/>
            <person name="Davis R.W."/>
            <person name="Theologis A."/>
            <person name="Ecker J.R."/>
        </authorList>
    </citation>
    <scope>NUCLEOTIDE SEQUENCE [LARGE SCALE MRNA]</scope>
    <source>
        <strain>cv. Columbia</strain>
    </source>
</reference>
<reference key="6">
    <citation type="journal article" date="2004" name="Plant Cell">
        <title>The xipotl mutant of Arabidopsis reveals a critical role for phospholipid metabolism in root system development and epidermal cell integrity.</title>
        <authorList>
            <person name="Cruz-Ramirez A."/>
            <person name="Lopez-Bucio J."/>
            <person name="Ramirez-Pimentel G."/>
            <person name="Zurita-Silva A."/>
            <person name="Sanchez-Calderon L."/>
            <person name="Ramirez-Chavez E."/>
            <person name="Gonzalez-Ortega E."/>
            <person name="Herrera-Estrella L."/>
        </authorList>
    </citation>
    <scope>FUNCTION</scope>
    <scope>TISSUE SPECIFICITY</scope>
    <scope>DISRUPTION PHENOTYPE</scope>
</reference>
<reference key="7">
    <citation type="journal article" date="2012" name="Mol. Cell. Proteomics">
        <title>Comparative large-scale characterisation of plant vs. mammal proteins reveals similar and idiosyncratic N-alpha acetylation features.</title>
        <authorList>
            <person name="Bienvenut W.V."/>
            <person name="Sumpton D."/>
            <person name="Martinez A."/>
            <person name="Lilla S."/>
            <person name="Espagne C."/>
            <person name="Meinnel T."/>
            <person name="Giglione C."/>
        </authorList>
    </citation>
    <scope>ACETYLATION [LARGE SCALE ANALYSIS] AT ALA-2</scope>
    <scope>CLEAVAGE OF INITIATOR METHIONINE [LARGE SCALE ANALYSIS]</scope>
    <scope>IDENTIFICATION BY MASS SPECTROMETRY [LARGE SCALE ANALYSIS]</scope>
</reference>
<reference key="8">
    <citation type="journal article" date="2018" name="Plant J.">
        <title>A pair of phospho-base methyltransferases important for phosphatidylcholine biosynthesis in Arabidopsis.</title>
        <authorList>
            <person name="Liu Y.C."/>
            <person name="Lin Y.C."/>
            <person name="Kanehara K."/>
            <person name="Nakamura Y."/>
        </authorList>
    </citation>
    <scope>FUNCTION</scope>
    <scope>TISSUE SPECIFICITY</scope>
    <scope>DISRUPTION PHENOTYPE</scope>
</reference>
<reference key="9">
    <citation type="journal article" date="2018" name="Plant Physiol.">
        <title>NMT1 and NMT3 N-methyltransferase activity is critical to lipid homeostasis, morphogenesis, and reproduction.</title>
        <authorList>
            <person name="Chen W."/>
            <person name="Salari H."/>
            <person name="Taylor M.C."/>
            <person name="Jost R."/>
            <person name="Berkowitz O."/>
            <person name="Barrow R."/>
            <person name="Qiu D."/>
            <person name="Branco R."/>
            <person name="Masle J."/>
        </authorList>
    </citation>
    <scope>FUNCTION</scope>
    <scope>DISRUPTION PHENOTYPE</scope>
</reference>
<reference key="10">
    <citation type="journal article" date="2019" name="New Phytol.">
        <title>Phosphoethanolamine N-methyltransferase 1 contributes to maintenance of root apical meristem by affecting ROS and auxin-regulated cell differentiation in Arabidopsis.</title>
        <authorList>
            <person name="Zou Y."/>
            <person name="Zhang X."/>
            <person name="Tan Y."/>
            <person name="Huang J.B."/>
            <person name="Zheng Z."/>
            <person name="Tao L.Z."/>
        </authorList>
    </citation>
    <scope>FUNCTION</scope>
    <scope>DISRUPTION PHENOTYPE</scope>
</reference>
<reference key="11">
    <citation type="journal article" date="2019" name="Plant Physiol.">
        <title>Loss of phosphoethanolamine N-methyltransferases abolishes phosphatidylcholine synthesis and is lethal.</title>
        <authorList>
            <person name="Chen W."/>
            <person name="Taylor M.C."/>
            <person name="Barrow R.A."/>
            <person name="Croyal M."/>
            <person name="Masle J."/>
        </authorList>
    </citation>
    <scope>DISRUPTION PHENOTYPE</scope>
</reference>
<reference key="12">
    <citation type="journal article" date="2019" name="Plant Physiol.">
        <title>A methyltransferase trio essential for phosphatidylcholine biosynthesis and growth.</title>
        <authorList>
            <person name="Liu Y.C."/>
            <person name="Lin Y.C."/>
            <person name="Kanehara K."/>
            <person name="Nakamura Y."/>
        </authorList>
    </citation>
    <scope>FUNCTION</scope>
    <scope>DISRUPTION PHENOTYPE</scope>
</reference>
<reference key="13">
    <citation type="journal article" date="2022" name="J. Exp. Bot.">
        <title>The phospho-base N-methyltransferases PMT1 and PMT2 produce phosphocholine for leaf growth in phosphorus-starved Arabidopsis.</title>
        <authorList>
            <person name="Ngo A.H."/>
            <person name="Angkawijaya A.E."/>
            <person name="Lin Y.C."/>
            <person name="Liu Y.C."/>
            <person name="Nakamura Y."/>
        </authorList>
    </citation>
    <scope>FUNCTION</scope>
    <scope>INDUCTION</scope>
</reference>
<reference key="14">
    <citation type="journal article" date="2022" name="J. Integr. Plant Biol.">
        <title>Abscisic acid-dependent PMT1 expression regulates salt tolerance by alleviating abscisic acid-mediated reactive oxygen species production in Arabidopsis.</title>
        <authorList>
            <person name="He Q.Y."/>
            <person name="Jin J.F."/>
            <person name="Lou H.Q."/>
            <person name="Dang F.F."/>
            <person name="Xu J.M."/>
            <person name="Zheng S.J."/>
            <person name="Yang J.L."/>
        </authorList>
    </citation>
    <scope>FUNCTION</scope>
    <scope>INDUCTION</scope>
    <scope>DISRUPTION PHENOTYPE</scope>
</reference>
<reference key="15">
    <citation type="journal article" date="2017" name="J. Biol. Chem.">
        <title>Conformational changes in the di-domain structure of Arabidopsis phosphoethanolamine methyltransferase leads to active-site formation.</title>
        <authorList>
            <person name="Lee S.G."/>
            <person name="Jez J.M."/>
        </authorList>
    </citation>
    <scope>X-RAY CRYSTALLOGRAPHY (1.34 ANGSTROMS) IN COMPLEX WITH S-ADENOSYL-L-HOMOCYSTEINE AND PHOSPHOCHOLINE</scope>
</reference>
<proteinExistence type="evidence at protein level"/>
<accession>Q9FR44</accession>
<accession>Q9LVH3</accession>
<organism>
    <name type="scientific">Arabidopsis thaliana</name>
    <name type="common">Mouse-ear cress</name>
    <dbReference type="NCBI Taxonomy" id="3702"/>
    <lineage>
        <taxon>Eukaryota</taxon>
        <taxon>Viridiplantae</taxon>
        <taxon>Streptophyta</taxon>
        <taxon>Embryophyta</taxon>
        <taxon>Tracheophyta</taxon>
        <taxon>Spermatophyta</taxon>
        <taxon>Magnoliopsida</taxon>
        <taxon>eudicotyledons</taxon>
        <taxon>Gunneridae</taxon>
        <taxon>Pentapetalae</taxon>
        <taxon>rosids</taxon>
        <taxon>malvids</taxon>
        <taxon>Brassicales</taxon>
        <taxon>Brassicaceae</taxon>
        <taxon>Camelineae</taxon>
        <taxon>Arabidopsis</taxon>
    </lineage>
</organism>
<feature type="initiator methionine" description="Removed" evidence="21">
    <location>
        <position position="1"/>
    </location>
</feature>
<feature type="chain" id="PRO_0000204426" description="Phosphoethanolamine N-methyltransferase 1">
    <location>
        <begin position="2"/>
        <end position="491"/>
    </location>
</feature>
<feature type="binding site" evidence="6 20">
    <location>
        <position position="61"/>
    </location>
    <ligand>
        <name>S-adenosyl-L-homocysteine</name>
        <dbReference type="ChEBI" id="CHEBI:57856"/>
    </ligand>
</feature>
<feature type="binding site" evidence="6 20">
    <location>
        <position position="66"/>
    </location>
    <ligand>
        <name>S-adenosyl-L-homocysteine</name>
        <dbReference type="ChEBI" id="CHEBI:57856"/>
    </ligand>
</feature>
<feature type="binding site" evidence="6 20">
    <location>
        <position position="82"/>
    </location>
    <ligand>
        <name>S-adenosyl-L-homocysteine</name>
        <dbReference type="ChEBI" id="CHEBI:57856"/>
    </ligand>
</feature>
<feature type="binding site" evidence="6 20">
    <location>
        <position position="107"/>
    </location>
    <ligand>
        <name>S-adenosyl-L-homocysteine</name>
        <dbReference type="ChEBI" id="CHEBI:57856"/>
    </ligand>
</feature>
<feature type="binding site" evidence="6 20">
    <location>
        <position position="108"/>
    </location>
    <ligand>
        <name>S-adenosyl-L-homocysteine</name>
        <dbReference type="ChEBI" id="CHEBI:57856"/>
    </ligand>
</feature>
<feature type="binding site" evidence="6 20">
    <location>
        <position position="126"/>
    </location>
    <ligand>
        <name>S-adenosyl-L-homocysteine</name>
        <dbReference type="ChEBI" id="CHEBI:57856"/>
    </ligand>
</feature>
<feature type="binding site" evidence="6 20">
    <location>
        <position position="159"/>
    </location>
    <ligand>
        <name>phosphocholine</name>
        <dbReference type="ChEBI" id="CHEBI:295975"/>
    </ligand>
</feature>
<feature type="binding site" evidence="6 20">
    <location>
        <position position="164"/>
    </location>
    <ligand>
        <name>phosphocholine</name>
        <dbReference type="ChEBI" id="CHEBI:295975"/>
    </ligand>
</feature>
<feature type="binding site" evidence="6 20">
    <location>
        <position position="165"/>
    </location>
    <ligand>
        <name>phosphocholine</name>
        <dbReference type="ChEBI" id="CHEBI:295975"/>
    </ligand>
</feature>
<feature type="binding site" evidence="6 20">
    <location>
        <position position="169"/>
    </location>
    <ligand>
        <name>phosphocholine</name>
        <dbReference type="ChEBI" id="CHEBI:295975"/>
    </ligand>
</feature>
<feature type="binding site" evidence="6 20">
    <location>
        <position position="176"/>
    </location>
    <ligand>
        <name>phosphocholine</name>
        <dbReference type="ChEBI" id="CHEBI:295975"/>
    </ligand>
</feature>
<feature type="binding site" evidence="1">
    <location>
        <begin position="245"/>
        <end position="246"/>
    </location>
    <ligand>
        <name>N-methylethanolamine phosphate</name>
        <dbReference type="ChEBI" id="CHEBI:57781"/>
    </ligand>
</feature>
<feature type="binding site" evidence="1">
    <location>
        <position position="254"/>
    </location>
    <ligand>
        <name>N-methylethanolamine phosphate</name>
        <dbReference type="ChEBI" id="CHEBI:57781"/>
    </ligand>
</feature>
<feature type="binding site" evidence="6 20">
    <location>
        <position position="254"/>
    </location>
    <ligand>
        <name>phosphocholine</name>
        <dbReference type="ChEBI" id="CHEBI:295975"/>
    </ligand>
</feature>
<feature type="binding site" evidence="6 20">
    <location>
        <position position="263"/>
    </location>
    <ligand>
        <name>S-adenosyl-L-homocysteine</name>
        <dbReference type="ChEBI" id="CHEBI:57856"/>
    </ligand>
</feature>
<feature type="binding site" evidence="6 20">
    <location>
        <position position="264"/>
    </location>
    <ligand>
        <name>S-adenosyl-L-homocysteine</name>
        <dbReference type="ChEBI" id="CHEBI:57856"/>
    </ligand>
</feature>
<feature type="binding site" evidence="6 20">
    <location>
        <position position="290"/>
    </location>
    <ligand>
        <name>S-adenosyl-L-homocysteine</name>
        <dbReference type="ChEBI" id="CHEBI:57856"/>
    </ligand>
</feature>
<feature type="binding site" evidence="6 20">
    <location>
        <position position="312"/>
    </location>
    <ligand>
        <name>S-adenosyl-L-homocysteine</name>
        <dbReference type="ChEBI" id="CHEBI:57856"/>
    </ligand>
</feature>
<feature type="binding site" evidence="6 20">
    <location>
        <position position="338"/>
    </location>
    <ligand>
        <name>S-adenosyl-L-homocysteine</name>
        <dbReference type="ChEBI" id="CHEBI:57856"/>
    </ligand>
</feature>
<feature type="binding site" evidence="6 20">
    <location>
        <position position="339"/>
    </location>
    <ligand>
        <name>S-adenosyl-L-homocysteine</name>
        <dbReference type="ChEBI" id="CHEBI:57856"/>
    </ligand>
</feature>
<feature type="binding site" evidence="1">
    <location>
        <position position="355"/>
    </location>
    <ligand>
        <name>S-adenosyl-L-homocysteine</name>
        <dbReference type="ChEBI" id="CHEBI:57856"/>
    </ligand>
</feature>
<feature type="binding site" evidence="1">
    <location>
        <position position="386"/>
    </location>
    <ligand>
        <name>N-methylethanolamine phosphate</name>
        <dbReference type="ChEBI" id="CHEBI:57781"/>
    </ligand>
</feature>
<feature type="binding site" evidence="6 20">
    <location>
        <position position="386"/>
    </location>
    <ligand>
        <name>phosphocholine</name>
        <dbReference type="ChEBI" id="CHEBI:295975"/>
    </ligand>
</feature>
<feature type="binding site" evidence="1">
    <location>
        <position position="400"/>
    </location>
    <ligand>
        <name>N-methylethanolamine phosphate</name>
        <dbReference type="ChEBI" id="CHEBI:57781"/>
    </ligand>
</feature>
<feature type="binding site" evidence="6 20">
    <location>
        <position position="400"/>
    </location>
    <ligand>
        <name>phosphocholine</name>
        <dbReference type="ChEBI" id="CHEBI:295975"/>
    </ligand>
</feature>
<feature type="binding site" evidence="1">
    <location>
        <begin position="404"/>
        <end position="406"/>
    </location>
    <ligand>
        <name>N-methylethanolamine phosphate</name>
        <dbReference type="ChEBI" id="CHEBI:57781"/>
    </ligand>
</feature>
<feature type="binding site" evidence="6 20">
    <location>
        <position position="404"/>
    </location>
    <ligand>
        <name>phosphocholine</name>
        <dbReference type="ChEBI" id="CHEBI:295975"/>
    </ligand>
</feature>
<feature type="binding site" evidence="6 20">
    <location>
        <position position="406"/>
    </location>
    <ligand>
        <name>phosphocholine</name>
        <dbReference type="ChEBI" id="CHEBI:295975"/>
    </ligand>
</feature>
<feature type="binding site" evidence="1">
    <location>
        <position position="472"/>
    </location>
    <ligand>
        <name>N-methylethanolamine phosphate</name>
        <dbReference type="ChEBI" id="CHEBI:57781"/>
    </ligand>
</feature>
<feature type="binding site" evidence="6 20">
    <location>
        <position position="472"/>
    </location>
    <ligand>
        <name>phosphocholine</name>
        <dbReference type="ChEBI" id="CHEBI:295975"/>
    </ligand>
</feature>
<feature type="modified residue" description="N-acetylalanine" evidence="21">
    <location>
        <position position="2"/>
    </location>
</feature>
<feature type="sequence conflict" description="In Ref. 5; AAM13092." evidence="17" ref="5">
    <original>E</original>
    <variation>G</variation>
    <location>
        <position position="333"/>
    </location>
</feature>
<feature type="helix" evidence="22">
    <location>
        <begin position="8"/>
        <end position="20"/>
    </location>
</feature>
<feature type="helix" evidence="22">
    <location>
        <begin position="25"/>
        <end position="29"/>
    </location>
</feature>
<feature type="helix" evidence="22">
    <location>
        <begin position="34"/>
        <end position="48"/>
    </location>
</feature>
<feature type="strand" evidence="22">
    <location>
        <begin position="55"/>
        <end position="61"/>
    </location>
</feature>
<feature type="helix" evidence="22">
    <location>
        <begin position="68"/>
        <end position="74"/>
    </location>
</feature>
<feature type="strand" evidence="22">
    <location>
        <begin position="76"/>
        <end position="83"/>
    </location>
</feature>
<feature type="helix" evidence="22">
    <location>
        <begin position="85"/>
        <end position="95"/>
    </location>
</feature>
<feature type="strand" evidence="22">
    <location>
        <begin position="101"/>
        <end position="105"/>
    </location>
</feature>
<feature type="strand" evidence="22">
    <location>
        <begin position="120"/>
        <end position="127"/>
    </location>
</feature>
<feature type="helix" evidence="22">
    <location>
        <begin position="129"/>
        <end position="131"/>
    </location>
</feature>
<feature type="helix" evidence="22">
    <location>
        <begin position="134"/>
        <end position="147"/>
    </location>
</feature>
<feature type="strand" evidence="22">
    <location>
        <begin position="148"/>
        <end position="162"/>
    </location>
</feature>
<feature type="helix" evidence="22">
    <location>
        <begin position="179"/>
        <end position="188"/>
    </location>
</feature>
<feature type="strand" evidence="22">
    <location>
        <begin position="198"/>
        <end position="208"/>
    </location>
</feature>
<feature type="helix" evidence="22">
    <location>
        <begin position="210"/>
        <end position="216"/>
    </location>
</feature>
<feature type="strand" evidence="22">
    <location>
        <begin position="221"/>
        <end position="230"/>
    </location>
</feature>
<feature type="helix" evidence="22">
    <location>
        <begin position="236"/>
        <end position="243"/>
    </location>
</feature>
<feature type="turn" evidence="22">
    <location>
        <begin position="244"/>
        <end position="246"/>
    </location>
</feature>
<feature type="helix" evidence="22">
    <location>
        <begin position="248"/>
        <end position="258"/>
    </location>
</feature>
<feature type="helix" evidence="22">
    <location>
        <begin position="267"/>
        <end position="276"/>
    </location>
</feature>
<feature type="strand" evidence="22">
    <location>
        <begin position="285"/>
        <end position="290"/>
    </location>
</feature>
<feature type="helix" evidence="22">
    <location>
        <begin position="295"/>
        <end position="304"/>
    </location>
</feature>
<feature type="strand" evidence="22">
    <location>
        <begin position="307"/>
        <end position="313"/>
    </location>
</feature>
<feature type="helix" evidence="22">
    <location>
        <begin position="315"/>
        <end position="324"/>
    </location>
</feature>
<feature type="turn" evidence="22">
    <location>
        <begin position="325"/>
        <end position="327"/>
    </location>
</feature>
<feature type="strand" evidence="22">
    <location>
        <begin position="332"/>
        <end position="336"/>
    </location>
</feature>
<feature type="turn" evidence="22">
    <location>
        <begin position="339"/>
        <end position="341"/>
    </location>
</feature>
<feature type="strand" evidence="22">
    <location>
        <begin position="349"/>
        <end position="356"/>
    </location>
</feature>
<feature type="helix" evidence="22">
    <location>
        <begin position="358"/>
        <end position="360"/>
    </location>
</feature>
<feature type="helix" evidence="22">
    <location>
        <begin position="364"/>
        <end position="374"/>
    </location>
</feature>
<feature type="strand" evidence="22">
    <location>
        <begin position="375"/>
        <end position="388"/>
    </location>
</feature>
<feature type="helix" evidence="22">
    <location>
        <begin position="395"/>
        <end position="404"/>
    </location>
</feature>
<feature type="helix" evidence="22">
    <location>
        <begin position="411"/>
        <end position="420"/>
    </location>
</feature>
<feature type="strand" evidence="22">
    <location>
        <begin position="424"/>
        <end position="430"/>
    </location>
</feature>
<feature type="helix" evidence="22">
    <location>
        <begin position="432"/>
        <end position="448"/>
    </location>
</feature>
<feature type="helix" evidence="22">
    <location>
        <begin position="450"/>
        <end position="456"/>
    </location>
</feature>
<feature type="helix" evidence="22">
    <location>
        <begin position="459"/>
        <end position="477"/>
    </location>
</feature>
<feature type="strand" evidence="22">
    <location>
        <begin position="481"/>
        <end position="489"/>
    </location>
</feature>
<keyword id="KW-0002">3D-structure</keyword>
<keyword id="KW-0007">Acetylation</keyword>
<keyword id="KW-0963">Cytoplasm</keyword>
<keyword id="KW-0444">Lipid biosynthesis</keyword>
<keyword id="KW-0443">Lipid metabolism</keyword>
<keyword id="KW-0489">Methyltransferase</keyword>
<keyword id="KW-0594">Phospholipid biosynthesis</keyword>
<keyword id="KW-1208">Phospholipid metabolism</keyword>
<keyword id="KW-1185">Reference proteome</keyword>
<keyword id="KW-0677">Repeat</keyword>
<keyword id="KW-0949">S-adenosyl-L-methionine</keyword>
<keyword id="KW-0808">Transferase</keyword>